<accession>A9W8M8</accession>
<name>BIOB_METEP</name>
<comment type="function">
    <text evidence="1">Catalyzes the conversion of dethiobiotin (DTB) to biotin by the insertion of a sulfur atom into dethiobiotin via a radical-based mechanism.</text>
</comment>
<comment type="catalytic activity">
    <reaction evidence="1">
        <text>(4R,5S)-dethiobiotin + (sulfur carrier)-SH + 2 reduced [2Fe-2S]-[ferredoxin] + 2 S-adenosyl-L-methionine = (sulfur carrier)-H + biotin + 2 5'-deoxyadenosine + 2 L-methionine + 2 oxidized [2Fe-2S]-[ferredoxin]</text>
        <dbReference type="Rhea" id="RHEA:22060"/>
        <dbReference type="Rhea" id="RHEA-COMP:10000"/>
        <dbReference type="Rhea" id="RHEA-COMP:10001"/>
        <dbReference type="Rhea" id="RHEA-COMP:14737"/>
        <dbReference type="Rhea" id="RHEA-COMP:14739"/>
        <dbReference type="ChEBI" id="CHEBI:17319"/>
        <dbReference type="ChEBI" id="CHEBI:29917"/>
        <dbReference type="ChEBI" id="CHEBI:33737"/>
        <dbReference type="ChEBI" id="CHEBI:33738"/>
        <dbReference type="ChEBI" id="CHEBI:57586"/>
        <dbReference type="ChEBI" id="CHEBI:57844"/>
        <dbReference type="ChEBI" id="CHEBI:59789"/>
        <dbReference type="ChEBI" id="CHEBI:64428"/>
        <dbReference type="ChEBI" id="CHEBI:149473"/>
        <dbReference type="EC" id="2.8.1.6"/>
    </reaction>
</comment>
<comment type="cofactor">
    <cofactor evidence="1">
        <name>[4Fe-4S] cluster</name>
        <dbReference type="ChEBI" id="CHEBI:49883"/>
    </cofactor>
    <text evidence="1">Binds 1 [4Fe-4S] cluster. The cluster is coordinated with 3 cysteines and an exchangeable S-adenosyl-L-methionine.</text>
</comment>
<comment type="cofactor">
    <cofactor evidence="1">
        <name>[2Fe-2S] cluster</name>
        <dbReference type="ChEBI" id="CHEBI:190135"/>
    </cofactor>
    <text evidence="1">Binds 1 [2Fe-2S] cluster. The cluster is coordinated with 3 cysteines and 1 arginine.</text>
</comment>
<comment type="pathway">
    <text evidence="1">Cofactor biosynthesis; biotin biosynthesis; biotin from 7,8-diaminononanoate: step 2/2.</text>
</comment>
<comment type="subunit">
    <text evidence="1">Homodimer.</text>
</comment>
<comment type="similarity">
    <text evidence="1">Belongs to the radical SAM superfamily. Biotin synthase family.</text>
</comment>
<protein>
    <recommendedName>
        <fullName evidence="1">Biotin synthase</fullName>
        <ecNumber evidence="1">2.8.1.6</ecNumber>
    </recommendedName>
</protein>
<proteinExistence type="inferred from homology"/>
<gene>
    <name evidence="1" type="primary">bioB</name>
    <name type="ordered locus">Mext_4006</name>
</gene>
<dbReference type="EC" id="2.8.1.6" evidence="1"/>
<dbReference type="EMBL" id="CP000908">
    <property type="protein sequence ID" value="ABY32377.1"/>
    <property type="molecule type" value="Genomic_DNA"/>
</dbReference>
<dbReference type="RefSeq" id="WP_003597522.1">
    <property type="nucleotide sequence ID" value="NC_010172.1"/>
</dbReference>
<dbReference type="SMR" id="A9W8M8"/>
<dbReference type="GeneID" id="72991724"/>
<dbReference type="KEGG" id="mex:Mext_4006"/>
<dbReference type="eggNOG" id="COG0502">
    <property type="taxonomic scope" value="Bacteria"/>
</dbReference>
<dbReference type="HOGENOM" id="CLU_033172_1_2_5"/>
<dbReference type="BioCyc" id="MEXT419610:MEXT_RS20120-MONOMER"/>
<dbReference type="UniPathway" id="UPA00078">
    <property type="reaction ID" value="UER00162"/>
</dbReference>
<dbReference type="GO" id="GO:0051537">
    <property type="term" value="F:2 iron, 2 sulfur cluster binding"/>
    <property type="evidence" value="ECO:0007669"/>
    <property type="project" value="UniProtKB-KW"/>
</dbReference>
<dbReference type="GO" id="GO:0051539">
    <property type="term" value="F:4 iron, 4 sulfur cluster binding"/>
    <property type="evidence" value="ECO:0007669"/>
    <property type="project" value="UniProtKB-KW"/>
</dbReference>
<dbReference type="GO" id="GO:0004076">
    <property type="term" value="F:biotin synthase activity"/>
    <property type="evidence" value="ECO:0007669"/>
    <property type="project" value="UniProtKB-UniRule"/>
</dbReference>
<dbReference type="GO" id="GO:0005506">
    <property type="term" value="F:iron ion binding"/>
    <property type="evidence" value="ECO:0007669"/>
    <property type="project" value="UniProtKB-UniRule"/>
</dbReference>
<dbReference type="GO" id="GO:0009102">
    <property type="term" value="P:biotin biosynthetic process"/>
    <property type="evidence" value="ECO:0007669"/>
    <property type="project" value="UniProtKB-UniRule"/>
</dbReference>
<dbReference type="CDD" id="cd01335">
    <property type="entry name" value="Radical_SAM"/>
    <property type="match status" value="1"/>
</dbReference>
<dbReference type="Gene3D" id="3.20.20.70">
    <property type="entry name" value="Aldolase class I"/>
    <property type="match status" value="1"/>
</dbReference>
<dbReference type="HAMAP" id="MF_01694">
    <property type="entry name" value="BioB"/>
    <property type="match status" value="1"/>
</dbReference>
<dbReference type="InterPro" id="IPR013785">
    <property type="entry name" value="Aldolase_TIM"/>
</dbReference>
<dbReference type="InterPro" id="IPR010722">
    <property type="entry name" value="BATS_dom"/>
</dbReference>
<dbReference type="InterPro" id="IPR002684">
    <property type="entry name" value="Biotin_synth/BioAB"/>
</dbReference>
<dbReference type="InterPro" id="IPR024177">
    <property type="entry name" value="Biotin_synthase"/>
</dbReference>
<dbReference type="InterPro" id="IPR006638">
    <property type="entry name" value="Elp3/MiaA/NifB-like_rSAM"/>
</dbReference>
<dbReference type="InterPro" id="IPR007197">
    <property type="entry name" value="rSAM"/>
</dbReference>
<dbReference type="NCBIfam" id="TIGR00433">
    <property type="entry name" value="bioB"/>
    <property type="match status" value="1"/>
</dbReference>
<dbReference type="PANTHER" id="PTHR22976">
    <property type="entry name" value="BIOTIN SYNTHASE"/>
    <property type="match status" value="1"/>
</dbReference>
<dbReference type="PANTHER" id="PTHR22976:SF2">
    <property type="entry name" value="BIOTIN SYNTHASE, MITOCHONDRIAL"/>
    <property type="match status" value="1"/>
</dbReference>
<dbReference type="Pfam" id="PF06968">
    <property type="entry name" value="BATS"/>
    <property type="match status" value="1"/>
</dbReference>
<dbReference type="Pfam" id="PF04055">
    <property type="entry name" value="Radical_SAM"/>
    <property type="match status" value="1"/>
</dbReference>
<dbReference type="PIRSF" id="PIRSF001619">
    <property type="entry name" value="Biotin_synth"/>
    <property type="match status" value="1"/>
</dbReference>
<dbReference type="SFLD" id="SFLDF00272">
    <property type="entry name" value="biotin_synthase"/>
    <property type="match status" value="1"/>
</dbReference>
<dbReference type="SFLD" id="SFLDS00029">
    <property type="entry name" value="Radical_SAM"/>
    <property type="match status" value="1"/>
</dbReference>
<dbReference type="SMART" id="SM00876">
    <property type="entry name" value="BATS"/>
    <property type="match status" value="1"/>
</dbReference>
<dbReference type="SMART" id="SM00729">
    <property type="entry name" value="Elp3"/>
    <property type="match status" value="1"/>
</dbReference>
<dbReference type="SUPFAM" id="SSF102114">
    <property type="entry name" value="Radical SAM enzymes"/>
    <property type="match status" value="1"/>
</dbReference>
<dbReference type="PROSITE" id="PS51918">
    <property type="entry name" value="RADICAL_SAM"/>
    <property type="match status" value="1"/>
</dbReference>
<organism>
    <name type="scientific">Methylorubrum extorquens (strain PA1)</name>
    <name type="common">Methylobacterium extorquens</name>
    <dbReference type="NCBI Taxonomy" id="419610"/>
    <lineage>
        <taxon>Bacteria</taxon>
        <taxon>Pseudomonadati</taxon>
        <taxon>Pseudomonadota</taxon>
        <taxon>Alphaproteobacteria</taxon>
        <taxon>Hyphomicrobiales</taxon>
        <taxon>Methylobacteriaceae</taxon>
        <taxon>Methylorubrum</taxon>
    </lineage>
</organism>
<keyword id="KW-0001">2Fe-2S</keyword>
<keyword id="KW-0004">4Fe-4S</keyword>
<keyword id="KW-0093">Biotin biosynthesis</keyword>
<keyword id="KW-0408">Iron</keyword>
<keyword id="KW-0411">Iron-sulfur</keyword>
<keyword id="KW-0479">Metal-binding</keyword>
<keyword id="KW-0949">S-adenosyl-L-methionine</keyword>
<keyword id="KW-0808">Transferase</keyword>
<reference key="1">
    <citation type="submission" date="2007-12" db="EMBL/GenBank/DDBJ databases">
        <title>Complete sequence of Methylobacterium extorquens PA1.</title>
        <authorList>
            <consortium name="US DOE Joint Genome Institute"/>
            <person name="Copeland A."/>
            <person name="Lucas S."/>
            <person name="Lapidus A."/>
            <person name="Barry K."/>
            <person name="Glavina del Rio T."/>
            <person name="Dalin E."/>
            <person name="Tice H."/>
            <person name="Pitluck S."/>
            <person name="Saunders E."/>
            <person name="Brettin T."/>
            <person name="Bruce D."/>
            <person name="Detter J.C."/>
            <person name="Han C."/>
            <person name="Schmutz J."/>
            <person name="Larimer F."/>
            <person name="Land M."/>
            <person name="Hauser L."/>
            <person name="Kyrpides N."/>
            <person name="Kim E."/>
            <person name="Marx C."/>
            <person name="Richardson P."/>
        </authorList>
    </citation>
    <scope>NUCLEOTIDE SEQUENCE [LARGE SCALE GENOMIC DNA]</scope>
    <source>
        <strain>PA1</strain>
    </source>
</reference>
<sequence length="335" mass="36063">MSDTVVSLTASPAAIRHDWTLAEIQAIHDMPLLDLVHRAGVVHRAHNDPADIQRAALLSIKTGGCPEDCAYCPQSAHHKGANLPRERLMPVDAVLKEAAAAKANGAHRFCMGAAWRKPKDGPDFDAVLEMVRGVRGLGMEACVTLGMLTQSQAQRLAEAGLTSYNHNLDTGPEFYGDIISTRTYDDRLQTLEHVRQAGIGVCCGGIVGMGERVRDRAEMLLVLANHAPHPESVPINALVAVEGTPLEDRPPIDPLDLVRMCATARIVMPKARVRLSAGRKSLTREAQILCFLAGANSIFYGERLLTTANNEADADAELLRDIGVPVPEVTLAAAE</sequence>
<evidence type="ECO:0000255" key="1">
    <source>
        <dbReference type="HAMAP-Rule" id="MF_01694"/>
    </source>
</evidence>
<evidence type="ECO:0000255" key="2">
    <source>
        <dbReference type="PROSITE-ProRule" id="PRU01266"/>
    </source>
</evidence>
<feature type="chain" id="PRO_0000381460" description="Biotin synthase">
    <location>
        <begin position="1"/>
        <end position="335"/>
    </location>
</feature>
<feature type="domain" description="Radical SAM core" evidence="2">
    <location>
        <begin position="50"/>
        <end position="279"/>
    </location>
</feature>
<feature type="binding site" evidence="1">
    <location>
        <position position="65"/>
    </location>
    <ligand>
        <name>[4Fe-4S] cluster</name>
        <dbReference type="ChEBI" id="CHEBI:49883"/>
        <note>4Fe-4S-S-AdoMet</note>
    </ligand>
</feature>
<feature type="binding site" evidence="1">
    <location>
        <position position="69"/>
    </location>
    <ligand>
        <name>[4Fe-4S] cluster</name>
        <dbReference type="ChEBI" id="CHEBI:49883"/>
        <note>4Fe-4S-S-AdoMet</note>
    </ligand>
</feature>
<feature type="binding site" evidence="1">
    <location>
        <position position="72"/>
    </location>
    <ligand>
        <name>[4Fe-4S] cluster</name>
        <dbReference type="ChEBI" id="CHEBI:49883"/>
        <note>4Fe-4S-S-AdoMet</note>
    </ligand>
</feature>
<feature type="binding site" evidence="1">
    <location>
        <position position="110"/>
    </location>
    <ligand>
        <name>[2Fe-2S] cluster</name>
        <dbReference type="ChEBI" id="CHEBI:190135"/>
    </ligand>
</feature>
<feature type="binding site" evidence="1">
    <location>
        <position position="142"/>
    </location>
    <ligand>
        <name>[2Fe-2S] cluster</name>
        <dbReference type="ChEBI" id="CHEBI:190135"/>
    </ligand>
</feature>
<feature type="binding site" evidence="1">
    <location>
        <position position="202"/>
    </location>
    <ligand>
        <name>[2Fe-2S] cluster</name>
        <dbReference type="ChEBI" id="CHEBI:190135"/>
    </ligand>
</feature>
<feature type="binding site" evidence="1">
    <location>
        <position position="274"/>
    </location>
    <ligand>
        <name>[2Fe-2S] cluster</name>
        <dbReference type="ChEBI" id="CHEBI:190135"/>
    </ligand>
</feature>